<keyword id="KW-0240">DNA-directed RNA polymerase</keyword>
<keyword id="KW-0548">Nucleotidyltransferase</keyword>
<keyword id="KW-1185">Reference proteome</keyword>
<keyword id="KW-0804">Transcription</keyword>
<keyword id="KW-0808">Transferase</keyword>
<evidence type="ECO:0000255" key="1">
    <source>
        <dbReference type="HAMAP-Rule" id="MF_00366"/>
    </source>
</evidence>
<dbReference type="EC" id="2.7.7.6" evidence="1"/>
<dbReference type="EMBL" id="CP000267">
    <property type="protein sequence ID" value="ABD70857.1"/>
    <property type="molecule type" value="Genomic_DNA"/>
</dbReference>
<dbReference type="RefSeq" id="WP_011465420.1">
    <property type="nucleotide sequence ID" value="NC_007908.1"/>
</dbReference>
<dbReference type="SMR" id="Q21TP6"/>
<dbReference type="STRING" id="338969.Rfer_3148"/>
<dbReference type="KEGG" id="rfr:Rfer_3148"/>
<dbReference type="eggNOG" id="COG1758">
    <property type="taxonomic scope" value="Bacteria"/>
</dbReference>
<dbReference type="HOGENOM" id="CLU_125406_5_2_4"/>
<dbReference type="OrthoDB" id="9796300at2"/>
<dbReference type="Proteomes" id="UP000008332">
    <property type="component" value="Chromosome"/>
</dbReference>
<dbReference type="GO" id="GO:0000428">
    <property type="term" value="C:DNA-directed RNA polymerase complex"/>
    <property type="evidence" value="ECO:0007669"/>
    <property type="project" value="UniProtKB-KW"/>
</dbReference>
<dbReference type="GO" id="GO:0003677">
    <property type="term" value="F:DNA binding"/>
    <property type="evidence" value="ECO:0007669"/>
    <property type="project" value="UniProtKB-UniRule"/>
</dbReference>
<dbReference type="GO" id="GO:0003899">
    <property type="term" value="F:DNA-directed RNA polymerase activity"/>
    <property type="evidence" value="ECO:0007669"/>
    <property type="project" value="UniProtKB-UniRule"/>
</dbReference>
<dbReference type="GO" id="GO:0006351">
    <property type="term" value="P:DNA-templated transcription"/>
    <property type="evidence" value="ECO:0007669"/>
    <property type="project" value="UniProtKB-UniRule"/>
</dbReference>
<dbReference type="Gene3D" id="3.90.940.10">
    <property type="match status" value="1"/>
</dbReference>
<dbReference type="HAMAP" id="MF_00366">
    <property type="entry name" value="RNApol_bact_RpoZ"/>
    <property type="match status" value="1"/>
</dbReference>
<dbReference type="InterPro" id="IPR003716">
    <property type="entry name" value="DNA-dir_RNA_pol_omega"/>
</dbReference>
<dbReference type="InterPro" id="IPR006110">
    <property type="entry name" value="Pol_omega/Rpo6/RPB6"/>
</dbReference>
<dbReference type="InterPro" id="IPR036161">
    <property type="entry name" value="RPB6/omega-like_sf"/>
</dbReference>
<dbReference type="NCBIfam" id="TIGR00690">
    <property type="entry name" value="rpoZ"/>
    <property type="match status" value="1"/>
</dbReference>
<dbReference type="PANTHER" id="PTHR34476">
    <property type="entry name" value="DNA-DIRECTED RNA POLYMERASE SUBUNIT OMEGA"/>
    <property type="match status" value="1"/>
</dbReference>
<dbReference type="PANTHER" id="PTHR34476:SF1">
    <property type="entry name" value="DNA-DIRECTED RNA POLYMERASE SUBUNIT OMEGA"/>
    <property type="match status" value="1"/>
</dbReference>
<dbReference type="Pfam" id="PF01192">
    <property type="entry name" value="RNA_pol_Rpb6"/>
    <property type="match status" value="1"/>
</dbReference>
<dbReference type="SMART" id="SM01409">
    <property type="entry name" value="RNA_pol_Rpb6"/>
    <property type="match status" value="1"/>
</dbReference>
<dbReference type="SUPFAM" id="SSF63562">
    <property type="entry name" value="RPB6/omega subunit-like"/>
    <property type="match status" value="1"/>
</dbReference>
<sequence>MARITVEDCLEQIPNRFQLVLAATYRARMLSQGHAPKVDCKNKPAVTALREIAAGKIGLEMLKKVPL</sequence>
<feature type="chain" id="PRO_1000005989" description="DNA-directed RNA polymerase subunit omega">
    <location>
        <begin position="1"/>
        <end position="67"/>
    </location>
</feature>
<name>RPOZ_ALBFT</name>
<proteinExistence type="inferred from homology"/>
<organism>
    <name type="scientific">Albidiferax ferrireducens (strain ATCC BAA-621 / DSM 15236 / T118)</name>
    <name type="common">Rhodoferax ferrireducens</name>
    <dbReference type="NCBI Taxonomy" id="338969"/>
    <lineage>
        <taxon>Bacteria</taxon>
        <taxon>Pseudomonadati</taxon>
        <taxon>Pseudomonadota</taxon>
        <taxon>Betaproteobacteria</taxon>
        <taxon>Burkholderiales</taxon>
        <taxon>Comamonadaceae</taxon>
        <taxon>Rhodoferax</taxon>
    </lineage>
</organism>
<comment type="function">
    <text evidence="1">Promotes RNA polymerase assembly. Latches the N- and C-terminal regions of the beta' subunit thereby facilitating its interaction with the beta and alpha subunits.</text>
</comment>
<comment type="catalytic activity">
    <reaction evidence="1">
        <text>RNA(n) + a ribonucleoside 5'-triphosphate = RNA(n+1) + diphosphate</text>
        <dbReference type="Rhea" id="RHEA:21248"/>
        <dbReference type="Rhea" id="RHEA-COMP:14527"/>
        <dbReference type="Rhea" id="RHEA-COMP:17342"/>
        <dbReference type="ChEBI" id="CHEBI:33019"/>
        <dbReference type="ChEBI" id="CHEBI:61557"/>
        <dbReference type="ChEBI" id="CHEBI:140395"/>
        <dbReference type="EC" id="2.7.7.6"/>
    </reaction>
</comment>
<comment type="subunit">
    <text evidence="1">The RNAP catalytic core consists of 2 alpha, 1 beta, 1 beta' and 1 omega subunit. When a sigma factor is associated with the core the holoenzyme is formed, which can initiate transcription.</text>
</comment>
<comment type="similarity">
    <text evidence="1">Belongs to the RNA polymerase subunit omega family.</text>
</comment>
<gene>
    <name evidence="1" type="primary">rpoZ</name>
    <name type="ordered locus">Rfer_3148</name>
</gene>
<accession>Q21TP6</accession>
<reference key="1">
    <citation type="submission" date="2006-02" db="EMBL/GenBank/DDBJ databases">
        <title>Complete sequence of chromosome of Rhodoferax ferrireducens DSM 15236.</title>
        <authorList>
            <person name="Copeland A."/>
            <person name="Lucas S."/>
            <person name="Lapidus A."/>
            <person name="Barry K."/>
            <person name="Detter J.C."/>
            <person name="Glavina del Rio T."/>
            <person name="Hammon N."/>
            <person name="Israni S."/>
            <person name="Pitluck S."/>
            <person name="Brettin T."/>
            <person name="Bruce D."/>
            <person name="Han C."/>
            <person name="Tapia R."/>
            <person name="Gilna P."/>
            <person name="Kiss H."/>
            <person name="Schmutz J."/>
            <person name="Larimer F."/>
            <person name="Land M."/>
            <person name="Kyrpides N."/>
            <person name="Ivanova N."/>
            <person name="Richardson P."/>
        </authorList>
    </citation>
    <scope>NUCLEOTIDE SEQUENCE [LARGE SCALE GENOMIC DNA]</scope>
    <source>
        <strain>ATCC BAA-621 / DSM 15236 / T118</strain>
    </source>
</reference>
<protein>
    <recommendedName>
        <fullName evidence="1">DNA-directed RNA polymerase subunit omega</fullName>
        <shortName evidence="1">RNAP omega subunit</shortName>
        <ecNumber evidence="1">2.7.7.6</ecNumber>
    </recommendedName>
    <alternativeName>
        <fullName evidence="1">RNA polymerase omega subunit</fullName>
    </alternativeName>
    <alternativeName>
        <fullName evidence="1">Transcriptase subunit omega</fullName>
    </alternativeName>
</protein>